<feature type="chain" id="PRO_1000059347" description="A-type ATP synthase subunit A">
    <location>
        <begin position="1"/>
        <end position="584"/>
    </location>
</feature>
<feature type="binding site" evidence="1">
    <location>
        <begin position="233"/>
        <end position="240"/>
    </location>
    <ligand>
        <name>ATP</name>
        <dbReference type="ChEBI" id="CHEBI:30616"/>
    </ligand>
</feature>
<keyword id="KW-0066">ATP synthesis</keyword>
<keyword id="KW-0067">ATP-binding</keyword>
<keyword id="KW-1003">Cell membrane</keyword>
<keyword id="KW-0375">Hydrogen ion transport</keyword>
<keyword id="KW-0406">Ion transport</keyword>
<keyword id="KW-0472">Membrane</keyword>
<keyword id="KW-0547">Nucleotide-binding</keyword>
<keyword id="KW-1278">Translocase</keyword>
<keyword id="KW-0813">Transport</keyword>
<sequence length="584" mass="64004">MIIEGKIIKIAGPVIIADGMRGAQMYEMVRVGEQKLIGEIIELEGDTATIQVYEETAGIQPGEVVESTGGPLSVELGPGVMGSIFDGIQRPLELIREESGDFIARGVDAESISKEKKWTFKPVAKVGDKVKGGDVLGEVQETSAVLQKILVPPMIEGELTSIASEGEYTVLEDIAEVATDKGDEKIQMLQKWPVRKGRPYVDKLDPDVPLVTGQRAQDTFFSVAKGGAAAIPGPFGSGKTVTQQQLAKWADADIVIYIGCGERGNEMTEVLTEFPYLDDPKTGNPLMDRTVLIANTSNMPVAAREACVYTGITIAEYYRDQGYDVALMADSTSRWAEAMREISGRLEEMPGEEGYPAYLASRLAQFYERAGRVNTIGTTSDVASITVVGAVSPPGGDLSEPVTQNTLRICKVFWALDASLADKRHFPSIDWLQSYSLYVDSIEGWWAENVAADWRETRDQAMILLQKESELQEIVQLVGPDALPEADQATLETTRMLREDFLQQNAFDDIDTYCPPVKQYNMLKTILLFHKEALAAVGRGVPIQNIVALPVKEEIGKMKYIPQDEFAAKCEEIQAAITKQCSEA</sequence>
<gene>
    <name evidence="1" type="primary">atpA</name>
    <name type="ordered locus">Msm_0435</name>
</gene>
<dbReference type="EC" id="7.1.2.2" evidence="1"/>
<dbReference type="EMBL" id="CP000678">
    <property type="protein sequence ID" value="ABQ86640.1"/>
    <property type="molecule type" value="Genomic_DNA"/>
</dbReference>
<dbReference type="RefSeq" id="WP_011953887.1">
    <property type="nucleotide sequence ID" value="NZ_CP117965.1"/>
</dbReference>
<dbReference type="SMR" id="A5UKB2"/>
<dbReference type="STRING" id="420247.Msm_0435"/>
<dbReference type="EnsemblBacteria" id="ABQ86640">
    <property type="protein sequence ID" value="ABQ86640"/>
    <property type="gene ID" value="Msm_0435"/>
</dbReference>
<dbReference type="KEGG" id="msi:Msm_0435"/>
<dbReference type="PATRIC" id="fig|420247.28.peg.435"/>
<dbReference type="eggNOG" id="arCOG00868">
    <property type="taxonomic scope" value="Archaea"/>
</dbReference>
<dbReference type="HOGENOM" id="CLU_008162_3_1_2"/>
<dbReference type="Proteomes" id="UP000001992">
    <property type="component" value="Chromosome"/>
</dbReference>
<dbReference type="GO" id="GO:0005886">
    <property type="term" value="C:plasma membrane"/>
    <property type="evidence" value="ECO:0007669"/>
    <property type="project" value="UniProtKB-SubCell"/>
</dbReference>
<dbReference type="GO" id="GO:0033178">
    <property type="term" value="C:proton-transporting two-sector ATPase complex, catalytic domain"/>
    <property type="evidence" value="ECO:0007669"/>
    <property type="project" value="InterPro"/>
</dbReference>
<dbReference type="GO" id="GO:0005524">
    <property type="term" value="F:ATP binding"/>
    <property type="evidence" value="ECO:0007669"/>
    <property type="project" value="UniProtKB-UniRule"/>
</dbReference>
<dbReference type="GO" id="GO:0046933">
    <property type="term" value="F:proton-transporting ATP synthase activity, rotational mechanism"/>
    <property type="evidence" value="ECO:0007669"/>
    <property type="project" value="UniProtKB-UniRule"/>
</dbReference>
<dbReference type="GO" id="GO:0046961">
    <property type="term" value="F:proton-transporting ATPase activity, rotational mechanism"/>
    <property type="evidence" value="ECO:0007669"/>
    <property type="project" value="InterPro"/>
</dbReference>
<dbReference type="GO" id="GO:0042777">
    <property type="term" value="P:proton motive force-driven plasma membrane ATP synthesis"/>
    <property type="evidence" value="ECO:0007669"/>
    <property type="project" value="UniProtKB-UniRule"/>
</dbReference>
<dbReference type="CDD" id="cd18111">
    <property type="entry name" value="ATP-synt_V_A-type_alpha_C"/>
    <property type="match status" value="1"/>
</dbReference>
<dbReference type="CDD" id="cd18119">
    <property type="entry name" value="ATP-synt_V_A-type_alpha_N"/>
    <property type="match status" value="1"/>
</dbReference>
<dbReference type="CDD" id="cd01134">
    <property type="entry name" value="V_A-ATPase_A"/>
    <property type="match status" value="1"/>
</dbReference>
<dbReference type="FunFam" id="1.10.1140.10:FF:000002">
    <property type="entry name" value="V-type proton ATPase catalytic subunit A"/>
    <property type="match status" value="1"/>
</dbReference>
<dbReference type="FunFam" id="2.40.30.20:FF:000002">
    <property type="entry name" value="V-type proton ATPase catalytic subunit A"/>
    <property type="match status" value="1"/>
</dbReference>
<dbReference type="FunFam" id="2.40.50.100:FF:000008">
    <property type="entry name" value="V-type proton ATPase catalytic subunit A"/>
    <property type="match status" value="1"/>
</dbReference>
<dbReference type="Gene3D" id="2.40.30.20">
    <property type="match status" value="1"/>
</dbReference>
<dbReference type="Gene3D" id="2.40.50.100">
    <property type="match status" value="1"/>
</dbReference>
<dbReference type="Gene3D" id="1.10.1140.10">
    <property type="entry name" value="Bovine Mitochondrial F1-atpase, Atp Synthase Beta Chain, Chain D, domain 3"/>
    <property type="match status" value="1"/>
</dbReference>
<dbReference type="Gene3D" id="3.40.50.300">
    <property type="entry name" value="P-loop containing nucleotide triphosphate hydrolases"/>
    <property type="match status" value="1"/>
</dbReference>
<dbReference type="HAMAP" id="MF_00309">
    <property type="entry name" value="ATP_synth_A_arch"/>
    <property type="match status" value="1"/>
</dbReference>
<dbReference type="InterPro" id="IPR055190">
    <property type="entry name" value="ATP-synt_VA_C"/>
</dbReference>
<dbReference type="InterPro" id="IPR031686">
    <property type="entry name" value="ATP-synth_a_Xtn"/>
</dbReference>
<dbReference type="InterPro" id="IPR023366">
    <property type="entry name" value="ATP_synth_asu-like_sf"/>
</dbReference>
<dbReference type="InterPro" id="IPR005726">
    <property type="entry name" value="ATP_synth_asu_arc"/>
</dbReference>
<dbReference type="InterPro" id="IPR020003">
    <property type="entry name" value="ATPase_a/bsu_AS"/>
</dbReference>
<dbReference type="InterPro" id="IPR004100">
    <property type="entry name" value="ATPase_F1/V1/A1_a/bsu_N"/>
</dbReference>
<dbReference type="InterPro" id="IPR036121">
    <property type="entry name" value="ATPase_F1/V1/A1_a/bsu_N_sf"/>
</dbReference>
<dbReference type="InterPro" id="IPR000194">
    <property type="entry name" value="ATPase_F1/V1/A1_a/bsu_nucl-bd"/>
</dbReference>
<dbReference type="InterPro" id="IPR024034">
    <property type="entry name" value="ATPase_F1/V1_b/a_C"/>
</dbReference>
<dbReference type="InterPro" id="IPR027417">
    <property type="entry name" value="P-loop_NTPase"/>
</dbReference>
<dbReference type="InterPro" id="IPR022878">
    <property type="entry name" value="V-ATPase_asu"/>
</dbReference>
<dbReference type="NCBIfam" id="TIGR01043">
    <property type="entry name" value="ATP_syn_A_arch"/>
    <property type="match status" value="1"/>
</dbReference>
<dbReference type="NCBIfam" id="NF003220">
    <property type="entry name" value="PRK04192.1"/>
    <property type="match status" value="1"/>
</dbReference>
<dbReference type="PANTHER" id="PTHR43607:SF1">
    <property type="entry name" value="H(+)-TRANSPORTING TWO-SECTOR ATPASE"/>
    <property type="match status" value="1"/>
</dbReference>
<dbReference type="PANTHER" id="PTHR43607">
    <property type="entry name" value="V-TYPE PROTON ATPASE CATALYTIC SUBUNIT A"/>
    <property type="match status" value="1"/>
</dbReference>
<dbReference type="Pfam" id="PF00006">
    <property type="entry name" value="ATP-synt_ab"/>
    <property type="match status" value="1"/>
</dbReference>
<dbReference type="Pfam" id="PF02874">
    <property type="entry name" value="ATP-synt_ab_N"/>
    <property type="match status" value="1"/>
</dbReference>
<dbReference type="Pfam" id="PF16886">
    <property type="entry name" value="ATP-synt_ab_Xtn"/>
    <property type="match status" value="1"/>
</dbReference>
<dbReference type="Pfam" id="PF22919">
    <property type="entry name" value="ATP-synt_VA_C"/>
    <property type="match status" value="1"/>
</dbReference>
<dbReference type="SUPFAM" id="SSF47917">
    <property type="entry name" value="C-terminal domain of alpha and beta subunits of F1 ATP synthase"/>
    <property type="match status" value="1"/>
</dbReference>
<dbReference type="SUPFAM" id="SSF50615">
    <property type="entry name" value="N-terminal domain of alpha and beta subunits of F1 ATP synthase"/>
    <property type="match status" value="1"/>
</dbReference>
<dbReference type="SUPFAM" id="SSF52540">
    <property type="entry name" value="P-loop containing nucleoside triphosphate hydrolases"/>
    <property type="match status" value="1"/>
</dbReference>
<dbReference type="PROSITE" id="PS00152">
    <property type="entry name" value="ATPASE_ALPHA_BETA"/>
    <property type="match status" value="1"/>
</dbReference>
<proteinExistence type="inferred from homology"/>
<comment type="function">
    <text evidence="1">Component of the A-type ATP synthase that produces ATP from ADP in the presence of a proton gradient across the membrane. The A chain is the catalytic subunit.</text>
</comment>
<comment type="catalytic activity">
    <reaction evidence="1">
        <text>ATP + H2O + 4 H(+)(in) = ADP + phosphate + 5 H(+)(out)</text>
        <dbReference type="Rhea" id="RHEA:57720"/>
        <dbReference type="ChEBI" id="CHEBI:15377"/>
        <dbReference type="ChEBI" id="CHEBI:15378"/>
        <dbReference type="ChEBI" id="CHEBI:30616"/>
        <dbReference type="ChEBI" id="CHEBI:43474"/>
        <dbReference type="ChEBI" id="CHEBI:456216"/>
        <dbReference type="EC" id="7.1.2.2"/>
    </reaction>
</comment>
<comment type="subunit">
    <text evidence="1">Has multiple subunits with at least A(3), B(3), C, D, E, F, H, I and proteolipid K(x).</text>
</comment>
<comment type="subcellular location">
    <subcellularLocation>
        <location evidence="1">Cell membrane</location>
        <topology evidence="1">Peripheral membrane protein</topology>
    </subcellularLocation>
</comment>
<comment type="similarity">
    <text evidence="1">Belongs to the ATPase alpha/beta chains family.</text>
</comment>
<reference key="1">
    <citation type="journal article" date="2007" name="Proc. Natl. Acad. Sci. U.S.A.">
        <title>Genomic and metabolic adaptations of Methanobrevibacter smithii to the human gut.</title>
        <authorList>
            <person name="Samuel B.S."/>
            <person name="Hansen E.E."/>
            <person name="Manchester J.K."/>
            <person name="Coutinho P.M."/>
            <person name="Henrissat B."/>
            <person name="Fulton R."/>
            <person name="Latreille P."/>
            <person name="Kim K."/>
            <person name="Wilson R.K."/>
            <person name="Gordon J.I."/>
        </authorList>
    </citation>
    <scope>NUCLEOTIDE SEQUENCE [LARGE SCALE GENOMIC DNA]</scope>
    <source>
        <strain>ATCC 35061 / DSM 861 / OCM 144 / PS</strain>
    </source>
</reference>
<evidence type="ECO:0000255" key="1">
    <source>
        <dbReference type="HAMAP-Rule" id="MF_00309"/>
    </source>
</evidence>
<name>AATA_METS3</name>
<organism>
    <name type="scientific">Methanobrevibacter smithii (strain ATCC 35061 / DSM 861 / OCM 144 / PS)</name>
    <dbReference type="NCBI Taxonomy" id="420247"/>
    <lineage>
        <taxon>Archaea</taxon>
        <taxon>Methanobacteriati</taxon>
        <taxon>Methanobacteriota</taxon>
        <taxon>Methanomada group</taxon>
        <taxon>Methanobacteria</taxon>
        <taxon>Methanobacteriales</taxon>
        <taxon>Methanobacteriaceae</taxon>
        <taxon>Methanobrevibacter</taxon>
    </lineage>
</organism>
<accession>A5UKB2</accession>
<protein>
    <recommendedName>
        <fullName evidence="1">A-type ATP synthase subunit A</fullName>
        <ecNumber evidence="1">7.1.2.2</ecNumber>
    </recommendedName>
</protein>